<proteinExistence type="inferred from homology"/>
<accession>B0RUI4</accession>
<name>APAG_XANCB</name>
<organism>
    <name type="scientific">Xanthomonas campestris pv. campestris (strain B100)</name>
    <dbReference type="NCBI Taxonomy" id="509169"/>
    <lineage>
        <taxon>Bacteria</taxon>
        <taxon>Pseudomonadati</taxon>
        <taxon>Pseudomonadota</taxon>
        <taxon>Gammaproteobacteria</taxon>
        <taxon>Lysobacterales</taxon>
        <taxon>Lysobacteraceae</taxon>
        <taxon>Xanthomonas</taxon>
    </lineage>
</organism>
<sequence>MQDDPRYRVEVEVSPRFLAHQSTPEEGRYAFAYSIRIQNAGAVPARLIARHWKITDANGRTEQVDGEGVVGEQPRLRPGEAFHYTSGVLLETEQGQMQGYYDMVADDGTEFTAPIAAFVLSVPRTLH</sequence>
<feature type="chain" id="PRO_1000133819" description="Protein ApaG">
    <location>
        <begin position="1"/>
        <end position="127"/>
    </location>
</feature>
<feature type="domain" description="ApaG" evidence="1">
    <location>
        <begin position="3"/>
        <end position="127"/>
    </location>
</feature>
<protein>
    <recommendedName>
        <fullName evidence="1">Protein ApaG</fullName>
    </recommendedName>
</protein>
<dbReference type="EMBL" id="AM920689">
    <property type="protein sequence ID" value="CAP52926.1"/>
    <property type="molecule type" value="Genomic_DNA"/>
</dbReference>
<dbReference type="SMR" id="B0RUI4"/>
<dbReference type="KEGG" id="xca:xcc-b100_3561"/>
<dbReference type="HOGENOM" id="CLU_128074_1_0_6"/>
<dbReference type="Proteomes" id="UP000001188">
    <property type="component" value="Chromosome"/>
</dbReference>
<dbReference type="GO" id="GO:0070987">
    <property type="term" value="P:error-free translesion synthesis"/>
    <property type="evidence" value="ECO:0007669"/>
    <property type="project" value="TreeGrafter"/>
</dbReference>
<dbReference type="Gene3D" id="2.60.40.1470">
    <property type="entry name" value="ApaG domain"/>
    <property type="match status" value="1"/>
</dbReference>
<dbReference type="HAMAP" id="MF_00791">
    <property type="entry name" value="ApaG"/>
    <property type="match status" value="1"/>
</dbReference>
<dbReference type="InterPro" id="IPR007474">
    <property type="entry name" value="ApaG_domain"/>
</dbReference>
<dbReference type="InterPro" id="IPR036767">
    <property type="entry name" value="ApaG_sf"/>
</dbReference>
<dbReference type="InterPro" id="IPR023065">
    <property type="entry name" value="Uncharacterised_ApaG"/>
</dbReference>
<dbReference type="NCBIfam" id="NF003967">
    <property type="entry name" value="PRK05461.1"/>
    <property type="match status" value="1"/>
</dbReference>
<dbReference type="PANTHER" id="PTHR14289">
    <property type="entry name" value="F-BOX ONLY PROTEIN 3"/>
    <property type="match status" value="1"/>
</dbReference>
<dbReference type="PANTHER" id="PTHR14289:SF16">
    <property type="entry name" value="POLYMERASE DELTA-INTERACTING PROTEIN 2"/>
    <property type="match status" value="1"/>
</dbReference>
<dbReference type="Pfam" id="PF04379">
    <property type="entry name" value="DUF525"/>
    <property type="match status" value="1"/>
</dbReference>
<dbReference type="SUPFAM" id="SSF110069">
    <property type="entry name" value="ApaG-like"/>
    <property type="match status" value="1"/>
</dbReference>
<dbReference type="PROSITE" id="PS51087">
    <property type="entry name" value="APAG"/>
    <property type="match status" value="1"/>
</dbReference>
<evidence type="ECO:0000255" key="1">
    <source>
        <dbReference type="HAMAP-Rule" id="MF_00791"/>
    </source>
</evidence>
<gene>
    <name evidence="1" type="primary">apaG</name>
    <name type="ordered locus">xcc-b100_3561</name>
</gene>
<reference key="1">
    <citation type="journal article" date="2008" name="J. Biotechnol.">
        <title>The genome of Xanthomonas campestris pv. campestris B100 and its use for the reconstruction of metabolic pathways involved in xanthan biosynthesis.</title>
        <authorList>
            <person name="Vorhoelter F.-J."/>
            <person name="Schneiker S."/>
            <person name="Goesmann A."/>
            <person name="Krause L."/>
            <person name="Bekel T."/>
            <person name="Kaiser O."/>
            <person name="Linke B."/>
            <person name="Patschkowski T."/>
            <person name="Rueckert C."/>
            <person name="Schmid J."/>
            <person name="Sidhu V.K."/>
            <person name="Sieber V."/>
            <person name="Tauch A."/>
            <person name="Watt S.A."/>
            <person name="Weisshaar B."/>
            <person name="Becker A."/>
            <person name="Niehaus K."/>
            <person name="Puehler A."/>
        </authorList>
    </citation>
    <scope>NUCLEOTIDE SEQUENCE [LARGE SCALE GENOMIC DNA]</scope>
    <source>
        <strain>B100</strain>
    </source>
</reference>